<protein>
    <recommendedName>
        <fullName evidence="1">Acetyl-coenzyme A synthetase</fullName>
        <shortName evidence="1">AcCoA synthetase</shortName>
        <shortName evidence="1">Acs</shortName>
        <ecNumber evidence="1">6.2.1.1</ecNumber>
    </recommendedName>
    <alternativeName>
        <fullName evidence="1">Acetate--CoA ligase</fullName>
    </alternativeName>
    <alternativeName>
        <fullName evidence="1">Acyl-activating enzyme</fullName>
    </alternativeName>
</protein>
<dbReference type="EC" id="6.2.1.1" evidence="1"/>
<dbReference type="EMBL" id="CP000348">
    <property type="protein sequence ID" value="ABJ77746.1"/>
    <property type="molecule type" value="Genomic_DNA"/>
</dbReference>
<dbReference type="SMR" id="Q056J9"/>
<dbReference type="KEGG" id="lbl:LBL_0125"/>
<dbReference type="PATRIC" id="fig|355276.3.peg.146"/>
<dbReference type="HOGENOM" id="CLU_000022_3_6_12"/>
<dbReference type="GO" id="GO:0005829">
    <property type="term" value="C:cytosol"/>
    <property type="evidence" value="ECO:0007669"/>
    <property type="project" value="TreeGrafter"/>
</dbReference>
<dbReference type="GO" id="GO:0003987">
    <property type="term" value="F:acetate-CoA ligase activity"/>
    <property type="evidence" value="ECO:0007669"/>
    <property type="project" value="UniProtKB-UniRule"/>
</dbReference>
<dbReference type="GO" id="GO:0016208">
    <property type="term" value="F:AMP binding"/>
    <property type="evidence" value="ECO:0007669"/>
    <property type="project" value="InterPro"/>
</dbReference>
<dbReference type="GO" id="GO:0005524">
    <property type="term" value="F:ATP binding"/>
    <property type="evidence" value="ECO:0007669"/>
    <property type="project" value="UniProtKB-KW"/>
</dbReference>
<dbReference type="GO" id="GO:0046872">
    <property type="term" value="F:metal ion binding"/>
    <property type="evidence" value="ECO:0007669"/>
    <property type="project" value="UniProtKB-KW"/>
</dbReference>
<dbReference type="GO" id="GO:0019427">
    <property type="term" value="P:acetyl-CoA biosynthetic process from acetate"/>
    <property type="evidence" value="ECO:0007669"/>
    <property type="project" value="InterPro"/>
</dbReference>
<dbReference type="CDD" id="cd05966">
    <property type="entry name" value="ACS"/>
    <property type="match status" value="1"/>
</dbReference>
<dbReference type="FunFam" id="3.30.300.30:FF:000004">
    <property type="entry name" value="Acetyl-coenzyme A synthetase"/>
    <property type="match status" value="1"/>
</dbReference>
<dbReference type="FunFam" id="3.40.50.12780:FF:000001">
    <property type="entry name" value="Acetyl-coenzyme A synthetase"/>
    <property type="match status" value="1"/>
</dbReference>
<dbReference type="Gene3D" id="3.30.300.30">
    <property type="match status" value="1"/>
</dbReference>
<dbReference type="Gene3D" id="3.40.50.12780">
    <property type="entry name" value="N-terminal domain of ligase-like"/>
    <property type="match status" value="1"/>
</dbReference>
<dbReference type="HAMAP" id="MF_01123">
    <property type="entry name" value="Ac_CoA_synth"/>
    <property type="match status" value="1"/>
</dbReference>
<dbReference type="InterPro" id="IPR011904">
    <property type="entry name" value="Ac_CoA_lig"/>
</dbReference>
<dbReference type="InterPro" id="IPR032387">
    <property type="entry name" value="ACAS_N"/>
</dbReference>
<dbReference type="InterPro" id="IPR025110">
    <property type="entry name" value="AMP-bd_C"/>
</dbReference>
<dbReference type="InterPro" id="IPR045851">
    <property type="entry name" value="AMP-bd_C_sf"/>
</dbReference>
<dbReference type="InterPro" id="IPR020845">
    <property type="entry name" value="AMP-binding_CS"/>
</dbReference>
<dbReference type="InterPro" id="IPR000873">
    <property type="entry name" value="AMP-dep_synth/lig_dom"/>
</dbReference>
<dbReference type="InterPro" id="IPR042099">
    <property type="entry name" value="ANL_N_sf"/>
</dbReference>
<dbReference type="NCBIfam" id="TIGR02188">
    <property type="entry name" value="Ac_CoA_lig_AcsA"/>
    <property type="match status" value="1"/>
</dbReference>
<dbReference type="NCBIfam" id="NF001208">
    <property type="entry name" value="PRK00174.1"/>
    <property type="match status" value="1"/>
</dbReference>
<dbReference type="PANTHER" id="PTHR24095">
    <property type="entry name" value="ACETYL-COENZYME A SYNTHETASE"/>
    <property type="match status" value="1"/>
</dbReference>
<dbReference type="PANTHER" id="PTHR24095:SF14">
    <property type="entry name" value="ACETYL-COENZYME A SYNTHETASE 1"/>
    <property type="match status" value="1"/>
</dbReference>
<dbReference type="Pfam" id="PF16177">
    <property type="entry name" value="ACAS_N"/>
    <property type="match status" value="1"/>
</dbReference>
<dbReference type="Pfam" id="PF00501">
    <property type="entry name" value="AMP-binding"/>
    <property type="match status" value="1"/>
</dbReference>
<dbReference type="Pfam" id="PF13193">
    <property type="entry name" value="AMP-binding_C"/>
    <property type="match status" value="1"/>
</dbReference>
<dbReference type="SUPFAM" id="SSF56801">
    <property type="entry name" value="Acetyl-CoA synthetase-like"/>
    <property type="match status" value="1"/>
</dbReference>
<dbReference type="PROSITE" id="PS00455">
    <property type="entry name" value="AMP_BINDING"/>
    <property type="match status" value="1"/>
</dbReference>
<comment type="function">
    <text evidence="1">Catalyzes the conversion of acetate into acetyl-CoA (AcCoA), an essential intermediate at the junction of anabolic and catabolic pathways. AcsA undergoes a two-step reaction. In the first half reaction, AcsA combines acetate with ATP to form acetyl-adenylate (AcAMP) intermediate. In the second half reaction, it can then transfer the acetyl group from AcAMP to the sulfhydryl group of CoA, forming the product AcCoA.</text>
</comment>
<comment type="catalytic activity">
    <reaction evidence="1">
        <text>acetate + ATP + CoA = acetyl-CoA + AMP + diphosphate</text>
        <dbReference type="Rhea" id="RHEA:23176"/>
        <dbReference type="ChEBI" id="CHEBI:30089"/>
        <dbReference type="ChEBI" id="CHEBI:30616"/>
        <dbReference type="ChEBI" id="CHEBI:33019"/>
        <dbReference type="ChEBI" id="CHEBI:57287"/>
        <dbReference type="ChEBI" id="CHEBI:57288"/>
        <dbReference type="ChEBI" id="CHEBI:456215"/>
        <dbReference type="EC" id="6.2.1.1"/>
    </reaction>
</comment>
<comment type="cofactor">
    <cofactor evidence="1">
        <name>Mg(2+)</name>
        <dbReference type="ChEBI" id="CHEBI:18420"/>
    </cofactor>
</comment>
<comment type="PTM">
    <text evidence="1">Acetylated. Deacetylation by the SIR2-homolog deacetylase activates the enzyme.</text>
</comment>
<comment type="similarity">
    <text evidence="1">Belongs to the ATP-dependent AMP-binding enzyme family.</text>
</comment>
<accession>Q056J9</accession>
<proteinExistence type="inferred from homology"/>
<evidence type="ECO:0000255" key="1">
    <source>
        <dbReference type="HAMAP-Rule" id="MF_01123"/>
    </source>
</evidence>
<name>ACSA_LEPBL</name>
<organism>
    <name type="scientific">Leptospira borgpetersenii serovar Hardjo-bovis (strain L550)</name>
    <dbReference type="NCBI Taxonomy" id="355276"/>
    <lineage>
        <taxon>Bacteria</taxon>
        <taxon>Pseudomonadati</taxon>
        <taxon>Spirochaetota</taxon>
        <taxon>Spirochaetia</taxon>
        <taxon>Leptospirales</taxon>
        <taxon>Leptospiraceae</taxon>
        <taxon>Leptospira</taxon>
    </lineage>
</organism>
<sequence>MAKERIVLPSAEFKKNSNITLKDYKSLYKESIENPNKFWAKEANRLTWFKKWTKVLNHDFKNAKVEWFKGGKLNVSYNCLDRHISTPLKNKAALIWEGDNPSESKVLTYYDVYREVNRFANVLKKYGVKKGDRVLVYLPMIPELAITILACTRIGAIHSVVFGGFSPEALQSRIDDCKPKLIVTADGGFRGGKPIELKRNVDIALEKSKEDVKTVIVVRRTGNESGLVWKDGRDYWYHFLISDPDLSPYCKPESMDAEDPLFILYTSGSTGKPKGVLHTTGGYLLGVNLTFHYVFDIKPEDTYWCTADIGWVTGHSYLVYGPLSNGASSVMFEGVPSYPDAGRFWDVIDKYGVNIFYTAPTAIRALMREGLTHVQKRNLSSLRLLGSVGEPINPEAWEWYFKIIGKEKCPIVDTWWQTETGSIMITALPGAIPQKPGSATLPFFGVQPVLVDNDGKEINDKGEVSGNLCIKSPWPSMMRGVYGDSKRFFDTYFSQFKGYYFTGDGARRDKDGYYWITGRVDDVINVSGHRIGSAEVESALVENRSVAEAAVVGFPHDIKGQGIYAYVTVKEGIATNDTLKKELVAIVEKVIGKIARPDVIHWAPSLPKTRSGKIMRRILRKIASGEFEGLGDTSTLADPSVVQKLIEDKRKFHS</sequence>
<feature type="chain" id="PRO_1000085002" description="Acetyl-coenzyme A synthetase">
    <location>
        <begin position="1"/>
        <end position="654"/>
    </location>
</feature>
<feature type="binding site" evidence="1">
    <location>
        <begin position="190"/>
        <end position="193"/>
    </location>
    <ligand>
        <name>CoA</name>
        <dbReference type="ChEBI" id="CHEBI:57287"/>
    </ligand>
</feature>
<feature type="binding site" evidence="1">
    <location>
        <position position="313"/>
    </location>
    <ligand>
        <name>CoA</name>
        <dbReference type="ChEBI" id="CHEBI:57287"/>
    </ligand>
</feature>
<feature type="binding site" evidence="1">
    <location>
        <begin position="389"/>
        <end position="391"/>
    </location>
    <ligand>
        <name>ATP</name>
        <dbReference type="ChEBI" id="CHEBI:30616"/>
    </ligand>
</feature>
<feature type="binding site" evidence="1">
    <location>
        <begin position="413"/>
        <end position="418"/>
    </location>
    <ligand>
        <name>ATP</name>
        <dbReference type="ChEBI" id="CHEBI:30616"/>
    </ligand>
</feature>
<feature type="binding site" evidence="1">
    <location>
        <position position="504"/>
    </location>
    <ligand>
        <name>ATP</name>
        <dbReference type="ChEBI" id="CHEBI:30616"/>
    </ligand>
</feature>
<feature type="binding site" evidence="1">
    <location>
        <position position="519"/>
    </location>
    <ligand>
        <name>ATP</name>
        <dbReference type="ChEBI" id="CHEBI:30616"/>
    </ligand>
</feature>
<feature type="binding site" evidence="1">
    <location>
        <position position="527"/>
    </location>
    <ligand>
        <name>CoA</name>
        <dbReference type="ChEBI" id="CHEBI:57287"/>
    </ligand>
</feature>
<feature type="binding site" evidence="1">
    <location>
        <position position="530"/>
    </location>
    <ligand>
        <name>ATP</name>
        <dbReference type="ChEBI" id="CHEBI:30616"/>
    </ligand>
</feature>
<feature type="binding site" evidence="1">
    <location>
        <position position="541"/>
    </location>
    <ligand>
        <name>Mg(2+)</name>
        <dbReference type="ChEBI" id="CHEBI:18420"/>
    </ligand>
</feature>
<feature type="binding site" evidence="1">
    <location>
        <position position="546"/>
    </location>
    <ligand>
        <name>Mg(2+)</name>
        <dbReference type="ChEBI" id="CHEBI:18420"/>
    </ligand>
</feature>
<feature type="modified residue" description="N6-acetyllysine" evidence="1">
    <location>
        <position position="613"/>
    </location>
</feature>
<keyword id="KW-0007">Acetylation</keyword>
<keyword id="KW-0067">ATP-binding</keyword>
<keyword id="KW-0436">Ligase</keyword>
<keyword id="KW-0460">Magnesium</keyword>
<keyword id="KW-0479">Metal-binding</keyword>
<keyword id="KW-0547">Nucleotide-binding</keyword>
<reference key="1">
    <citation type="journal article" date="2006" name="Proc. Natl. Acad. Sci. U.S.A.">
        <title>Genome reduction in Leptospira borgpetersenii reflects limited transmission potential.</title>
        <authorList>
            <person name="Bulach D.M."/>
            <person name="Zuerner R.L."/>
            <person name="Wilson P."/>
            <person name="Seemann T."/>
            <person name="McGrath A."/>
            <person name="Cullen P.A."/>
            <person name="Davis J."/>
            <person name="Johnson M."/>
            <person name="Kuczek E."/>
            <person name="Alt D.P."/>
            <person name="Peterson-Burch B."/>
            <person name="Coppel R.L."/>
            <person name="Rood J.I."/>
            <person name="Davies J.K."/>
            <person name="Adler B."/>
        </authorList>
    </citation>
    <scope>NUCLEOTIDE SEQUENCE [LARGE SCALE GENOMIC DNA]</scope>
    <source>
        <strain>L550</strain>
    </source>
</reference>
<gene>
    <name evidence="1" type="primary">acsA</name>
    <name type="ordered locus">LBL_0125</name>
</gene>